<name>GPA4_CAEEL</name>
<proteinExistence type="evidence at transcript level"/>
<feature type="initiator methionine" description="Removed" evidence="2">
    <location>
        <position position="1"/>
    </location>
</feature>
<feature type="chain" id="PRO_0000203635" description="Guanine nucleotide-binding protein alpha-4 subunit">
    <location>
        <begin position="2"/>
        <end position="359"/>
    </location>
</feature>
<feature type="domain" description="G-alpha" evidence="3">
    <location>
        <begin position="31"/>
        <end position="359"/>
    </location>
</feature>
<feature type="region of interest" description="G1 motif" evidence="3">
    <location>
        <begin position="34"/>
        <end position="47"/>
    </location>
</feature>
<feature type="region of interest" description="G2 motif" evidence="3">
    <location>
        <begin position="176"/>
        <end position="184"/>
    </location>
</feature>
<feature type="region of interest" description="G3 motif" evidence="3">
    <location>
        <begin position="199"/>
        <end position="208"/>
    </location>
</feature>
<feature type="region of interest" description="G4 motif" evidence="3">
    <location>
        <begin position="268"/>
        <end position="275"/>
    </location>
</feature>
<feature type="region of interest" description="G5 motif" evidence="3">
    <location>
        <begin position="329"/>
        <end position="334"/>
    </location>
</feature>
<feature type="binding site" evidence="1">
    <location>
        <begin position="39"/>
        <end position="46"/>
    </location>
    <ligand>
        <name>GTP</name>
        <dbReference type="ChEBI" id="CHEBI:37565"/>
    </ligand>
</feature>
<feature type="binding site" evidence="1">
    <location>
        <position position="46"/>
    </location>
    <ligand>
        <name>Mg(2+)</name>
        <dbReference type="ChEBI" id="CHEBI:18420"/>
    </ligand>
</feature>
<feature type="binding site" evidence="1">
    <location>
        <begin position="178"/>
        <end position="184"/>
    </location>
    <ligand>
        <name>GTP</name>
        <dbReference type="ChEBI" id="CHEBI:37565"/>
    </ligand>
</feature>
<feature type="binding site" evidence="1">
    <location>
        <begin position="203"/>
        <end position="207"/>
    </location>
    <ligand>
        <name>GTP</name>
        <dbReference type="ChEBI" id="CHEBI:37565"/>
    </ligand>
</feature>
<feature type="binding site" evidence="1">
    <location>
        <begin position="272"/>
        <end position="275"/>
    </location>
    <ligand>
        <name>GTP</name>
        <dbReference type="ChEBI" id="CHEBI:37565"/>
    </ligand>
</feature>
<feature type="binding site" evidence="1">
    <location>
        <position position="331"/>
    </location>
    <ligand>
        <name>GTP</name>
        <dbReference type="ChEBI" id="CHEBI:37565"/>
    </ligand>
</feature>
<feature type="lipid moiety-binding region" description="N-myristoyl glycine" evidence="2">
    <location>
        <position position="2"/>
    </location>
</feature>
<feature type="lipid moiety-binding region" description="S-palmitoyl cysteine" evidence="2">
    <location>
        <position position="3"/>
    </location>
</feature>
<sequence length="359" mass="41671">MGCFHSTGSEAKKRSKLIDEQLRHDHERCVGEIKLLLLGAGESGKSTIVRQMRILHETGFNKQEQMAYRPVVFSNMVQSMLAILKAMQPLNISFTDAAREEDARMFISHFLHVNNAELSEAFSLELSDLMKQLWMDEGVKKCVKRAHEYQLNDSAEYYFNALDRISSSSYLPTQDDILRARVKSTGIVETTFMYKDLCFKMFDVGGQRSERKKWIHCFDSVTAVIFCVALSEYDLRLAEDQTMNRMHESMQLFDSIVNNCWFTETSIILFLNKMDIFEERIRYTPLTVCFPEYQGGMTITETSTFIQSRFEILNKRQTPAQKEIYSHFTCATDTNNIRFVFDAVTDIIIRNNLYLCGLY</sequence>
<comment type="function">
    <text evidence="4">Guanine nucleotide-binding proteins (G proteins) are involved as modulators or transducers in various transmembrane signaling systems. Acts in concert with npr-15 to activate TGF-beta-like daf-7 secretion in the ASI neuron, thereby promoting larval development and inhibition of dauer diapause (PubMed:37060828).</text>
</comment>
<comment type="subunit">
    <text>G proteins are composed of 3 units; alpha, beta and gamma. The alpha chain contains the guanine nucleotide binding site.</text>
</comment>
<comment type="tissue specificity">
    <text evidence="4">Expressed in ASI neurons.</text>
</comment>
<comment type="developmental stage">
    <text evidence="4">Expressed in ASI neurons during L2 larval development.</text>
</comment>
<comment type="disruption phenotype">
    <text evidence="4">Increases the likelihood of dauer diapause in L2 larval stage animals (PubMed:37060828). Reduces the level of daf-7 secreted in the ASI neurons but has no effect on daf-28 secretion (PubMed:37060828).</text>
</comment>
<comment type="similarity">
    <text evidence="5">Belongs to the G-alpha family. G(i/o/t/z) subfamily.</text>
</comment>
<organism>
    <name type="scientific">Caenorhabditis elegans</name>
    <dbReference type="NCBI Taxonomy" id="6239"/>
    <lineage>
        <taxon>Eukaryota</taxon>
        <taxon>Metazoa</taxon>
        <taxon>Ecdysozoa</taxon>
        <taxon>Nematoda</taxon>
        <taxon>Chromadorea</taxon>
        <taxon>Rhabditida</taxon>
        <taxon>Rhabditina</taxon>
        <taxon>Rhabditomorpha</taxon>
        <taxon>Rhabditoidea</taxon>
        <taxon>Rhabditidae</taxon>
        <taxon>Peloderinae</taxon>
        <taxon>Caenorhabditis</taxon>
    </lineage>
</organism>
<evidence type="ECO:0000250" key="1"/>
<evidence type="ECO:0000255" key="2"/>
<evidence type="ECO:0000255" key="3">
    <source>
        <dbReference type="PROSITE-ProRule" id="PRU01230"/>
    </source>
</evidence>
<evidence type="ECO:0000269" key="4">
    <source>
    </source>
</evidence>
<evidence type="ECO:0000305" key="5"/>
<keyword id="KW-0342">GTP-binding</keyword>
<keyword id="KW-0449">Lipoprotein</keyword>
<keyword id="KW-0460">Magnesium</keyword>
<keyword id="KW-0479">Metal-binding</keyword>
<keyword id="KW-0519">Myristate</keyword>
<keyword id="KW-0547">Nucleotide-binding</keyword>
<keyword id="KW-0564">Palmitate</keyword>
<keyword id="KW-1185">Reference proteome</keyword>
<keyword id="KW-0807">Transducer</keyword>
<dbReference type="EMBL" id="AY008127">
    <property type="protein sequence ID" value="AAG32080.1"/>
    <property type="molecule type" value="mRNA"/>
</dbReference>
<dbReference type="EMBL" id="FO081716">
    <property type="protein sequence ID" value="CCD73978.1"/>
    <property type="molecule type" value="Genomic_DNA"/>
</dbReference>
<dbReference type="PIR" id="T32578">
    <property type="entry name" value="T32578"/>
</dbReference>
<dbReference type="RefSeq" id="NP_499921.2">
    <property type="nucleotide sequence ID" value="NM_067520.6"/>
</dbReference>
<dbReference type="SMR" id="Q9BIG5"/>
<dbReference type="FunCoup" id="Q9BIG5">
    <property type="interactions" value="134"/>
</dbReference>
<dbReference type="STRING" id="6239.T07A9.7.1"/>
<dbReference type="PaxDb" id="6239-T07A9.7"/>
<dbReference type="EnsemblMetazoa" id="T07A9.7.1">
    <property type="protein sequence ID" value="T07A9.7.1"/>
    <property type="gene ID" value="WBGene00001666"/>
</dbReference>
<dbReference type="GeneID" id="176865"/>
<dbReference type="KEGG" id="cel:CELE_T07A9.7"/>
<dbReference type="UCSC" id="T07A9.7">
    <property type="organism name" value="c. elegans"/>
</dbReference>
<dbReference type="AGR" id="WB:WBGene00001666"/>
<dbReference type="CTD" id="176865"/>
<dbReference type="WormBase" id="T07A9.7">
    <property type="protein sequence ID" value="CE31599"/>
    <property type="gene ID" value="WBGene00001666"/>
    <property type="gene designation" value="gpa-4"/>
</dbReference>
<dbReference type="eggNOG" id="KOG0082">
    <property type="taxonomic scope" value="Eukaryota"/>
</dbReference>
<dbReference type="GeneTree" id="ENSGT00940000165593"/>
<dbReference type="HOGENOM" id="CLU_014184_6_0_1"/>
<dbReference type="InParanoid" id="Q9BIG5"/>
<dbReference type="OMA" id="GHRDKWI"/>
<dbReference type="OrthoDB" id="5817230at2759"/>
<dbReference type="PhylomeDB" id="Q9BIG5"/>
<dbReference type="Reactome" id="R-CEL-170670">
    <property type="pathway name" value="Adenylate cyclase inhibitory pathway"/>
</dbReference>
<dbReference type="Reactome" id="R-CEL-392170">
    <property type="pathway name" value="ADP signalling through P2Y purinoceptor 12"/>
</dbReference>
<dbReference type="Reactome" id="R-CEL-418594">
    <property type="pathway name" value="G alpha (i) signalling events"/>
</dbReference>
<dbReference type="PRO" id="PR:Q9BIG5"/>
<dbReference type="Proteomes" id="UP000001940">
    <property type="component" value="Chromosome IV"/>
</dbReference>
<dbReference type="GO" id="GO:0005929">
    <property type="term" value="C:cilium"/>
    <property type="evidence" value="ECO:0000314"/>
    <property type="project" value="UniProtKB"/>
</dbReference>
<dbReference type="GO" id="GO:0005737">
    <property type="term" value="C:cytoplasm"/>
    <property type="evidence" value="ECO:0000318"/>
    <property type="project" value="GO_Central"/>
</dbReference>
<dbReference type="GO" id="GO:0005834">
    <property type="term" value="C:heterotrimeric G-protein complex"/>
    <property type="evidence" value="ECO:0000318"/>
    <property type="project" value="GO_Central"/>
</dbReference>
<dbReference type="GO" id="GO:0097730">
    <property type="term" value="C:non-motile cilium"/>
    <property type="evidence" value="ECO:0000314"/>
    <property type="project" value="UniProtKB"/>
</dbReference>
<dbReference type="GO" id="GO:0001664">
    <property type="term" value="F:G protein-coupled receptor binding"/>
    <property type="evidence" value="ECO:0000318"/>
    <property type="project" value="GO_Central"/>
</dbReference>
<dbReference type="GO" id="GO:0031683">
    <property type="term" value="F:G-protein beta/gamma-subunit complex binding"/>
    <property type="evidence" value="ECO:0000318"/>
    <property type="project" value="GO_Central"/>
</dbReference>
<dbReference type="GO" id="GO:0005525">
    <property type="term" value="F:GTP binding"/>
    <property type="evidence" value="ECO:0007669"/>
    <property type="project" value="UniProtKB-KW"/>
</dbReference>
<dbReference type="GO" id="GO:0003924">
    <property type="term" value="F:GTPase activity"/>
    <property type="evidence" value="ECO:0000318"/>
    <property type="project" value="GO_Central"/>
</dbReference>
<dbReference type="GO" id="GO:0046872">
    <property type="term" value="F:metal ion binding"/>
    <property type="evidence" value="ECO:0007669"/>
    <property type="project" value="UniProtKB-KW"/>
</dbReference>
<dbReference type="GO" id="GO:0007188">
    <property type="term" value="P:adenylate cyclase-modulating G protein-coupled receptor signaling pathway"/>
    <property type="evidence" value="ECO:0000318"/>
    <property type="project" value="GO_Central"/>
</dbReference>
<dbReference type="CDD" id="cd00066">
    <property type="entry name" value="G-alpha"/>
    <property type="match status" value="1"/>
</dbReference>
<dbReference type="FunFam" id="1.10.400.10:FF:000001">
    <property type="entry name" value="Guanine nucleotide-binding protein G(I) subunit alpha"/>
    <property type="match status" value="1"/>
</dbReference>
<dbReference type="FunFam" id="3.40.50.300:FF:002307">
    <property type="entry name" value="Guanine nucleotide-binding protein G(k) subunit alpha"/>
    <property type="match status" value="1"/>
</dbReference>
<dbReference type="Gene3D" id="1.10.400.10">
    <property type="entry name" value="GI Alpha 1, domain 2-like"/>
    <property type="match status" value="1"/>
</dbReference>
<dbReference type="Gene3D" id="3.40.50.300">
    <property type="entry name" value="P-loop containing nucleotide triphosphate hydrolases"/>
    <property type="match status" value="1"/>
</dbReference>
<dbReference type="InterPro" id="IPR001408">
    <property type="entry name" value="Gprotein_alpha_I"/>
</dbReference>
<dbReference type="InterPro" id="IPR001019">
    <property type="entry name" value="Gprotein_alpha_su"/>
</dbReference>
<dbReference type="InterPro" id="IPR011025">
    <property type="entry name" value="GproteinA_insert"/>
</dbReference>
<dbReference type="InterPro" id="IPR027417">
    <property type="entry name" value="P-loop_NTPase"/>
</dbReference>
<dbReference type="PANTHER" id="PTHR10218">
    <property type="entry name" value="GTP-BINDING PROTEIN ALPHA SUBUNIT"/>
    <property type="match status" value="1"/>
</dbReference>
<dbReference type="PANTHER" id="PTHR10218:SF349">
    <property type="entry name" value="GUANINE NUCLEOTIDE-BINDING PROTEIN ALPHA-4 SUBUNIT"/>
    <property type="match status" value="1"/>
</dbReference>
<dbReference type="Pfam" id="PF00503">
    <property type="entry name" value="G-alpha"/>
    <property type="match status" value="1"/>
</dbReference>
<dbReference type="PRINTS" id="PR00318">
    <property type="entry name" value="GPROTEINA"/>
</dbReference>
<dbReference type="PRINTS" id="PR00441">
    <property type="entry name" value="GPROTEINAI"/>
</dbReference>
<dbReference type="SMART" id="SM00275">
    <property type="entry name" value="G_alpha"/>
    <property type="match status" value="1"/>
</dbReference>
<dbReference type="SUPFAM" id="SSF52540">
    <property type="entry name" value="P-loop containing nucleoside triphosphate hydrolases"/>
    <property type="match status" value="1"/>
</dbReference>
<dbReference type="SUPFAM" id="SSF47895">
    <property type="entry name" value="Transducin (alpha subunit), insertion domain"/>
    <property type="match status" value="1"/>
</dbReference>
<dbReference type="PROSITE" id="PS51882">
    <property type="entry name" value="G_ALPHA"/>
    <property type="match status" value="1"/>
</dbReference>
<reference key="1">
    <citation type="submission" date="2000-09" db="EMBL/GenBank/DDBJ databases">
        <title>Interaction analysis of the complete G-alpha subfamily of heterotrimeric G proteins from Caenorhabditis elegans.</title>
        <authorList>
            <person name="Cuppen E."/>
            <person name="Jansen G."/>
            <person name="Plasterk R.H.A."/>
        </authorList>
    </citation>
    <scope>NUCLEOTIDE SEQUENCE [MRNA]</scope>
    <source>
        <strain>Bristol N2</strain>
    </source>
</reference>
<reference key="2">
    <citation type="journal article" date="1998" name="Science">
        <title>Genome sequence of the nematode C. elegans: a platform for investigating biology.</title>
        <authorList>
            <consortium name="The C. elegans sequencing consortium"/>
        </authorList>
    </citation>
    <scope>NUCLEOTIDE SEQUENCE [LARGE SCALE GENOMIC DNA]</scope>
    <source>
        <strain>Bristol N2</strain>
    </source>
</reference>
<reference key="3">
    <citation type="journal article" date="1999" name="Nat. Genet.">
        <title>The complete family of genes encoding G proteins of Caenorhabditis elegans.</title>
        <authorList>
            <person name="Jansen G."/>
            <person name="Thijssen K.L."/>
            <person name="Werner P."/>
            <person name="van der Horst M."/>
            <person name="Hazendonk E."/>
            <person name="Plasterk R.H.A."/>
        </authorList>
    </citation>
    <scope>GENE FAMILY</scope>
    <scope>NOMENCLATURE</scope>
</reference>
<reference evidence="5" key="4">
    <citation type="journal article" date="2023" name="Biochem. Biophys. Res. Commun.">
        <title>The G protein-coupled receptor neuropeptide receptor-15 modulates larval development via the transforming growth factor-beta DAF-7 protein in Caenorhabditis elegans.</title>
        <authorList>
            <person name="Ono M."/>
            <person name="Matsushita K."/>
            <person name="Maega S."/>
            <person name="Asano N."/>
            <person name="Matsunaga Y."/>
            <person name="Bito T."/>
            <person name="Iwasaki T."/>
            <person name="Kawano T."/>
        </authorList>
    </citation>
    <scope>FUNCTION</scope>
    <scope>TISSUE SPECIFICITY</scope>
    <scope>DEVELOPMENTAL STAGE</scope>
    <scope>DISRUPTION PHENOTYPE</scope>
</reference>
<accession>Q9BIG5</accession>
<accession>O44409</accession>
<gene>
    <name type="primary">gpa-4</name>
    <name type="ORF">T07A9.7</name>
</gene>
<protein>
    <recommendedName>
        <fullName>Guanine nucleotide-binding protein alpha-4 subunit</fullName>
    </recommendedName>
</protein>